<name>VSPCA_AGKPL</name>
<sequence>MVLIRVLANLLILHLSYAQKSSELVIGGDECNINEHRFLALVYANGSLCGGTLINQEWVLTARHCDRGNMRIYLGMHNLKVLNKDALRRFPKEKYFCLNIRNDTIWDKDIMLIRLNRPVRNSAHIAPLSLPSNPPSVGSVCRVMGWGTITSPNATLPDVPHCANINILDYAVCQAAYRGLAATTLCSGILEGGKDTCKGDSGGPLICNGQFQGILSVGGNPCAQPRKPGVYTKVFDYTDWIQSIISGNTDAACPP</sequence>
<feature type="signal peptide" evidence="4">
    <location>
        <begin position="1"/>
        <end position="18"/>
    </location>
</feature>
<feature type="propeptide" id="PRO_0000432332" evidence="3">
    <location>
        <begin position="19"/>
        <end position="24"/>
    </location>
</feature>
<feature type="chain" id="PRO_0000432333" description="Protein C activator">
    <location>
        <begin position="25"/>
        <end position="255"/>
    </location>
</feature>
<feature type="domain" description="Peptidase S1" evidence="5">
    <location>
        <begin position="25"/>
        <end position="246"/>
    </location>
</feature>
<feature type="active site" description="Charge relay system" evidence="2">
    <location>
        <position position="64"/>
    </location>
</feature>
<feature type="active site" description="Charge relay system" evidence="2">
    <location>
        <position position="109"/>
    </location>
</feature>
<feature type="active site" description="Charge relay system" evidence="2">
    <location>
        <position position="201"/>
    </location>
</feature>
<feature type="glycosylation site" description="N-linked (GlcNAc...) asparagine" evidence="2">
    <location>
        <position position="45"/>
    </location>
</feature>
<feature type="glycosylation site" description="N-linked (GlcNAc...) asparagine" evidence="2">
    <location>
        <position position="102"/>
    </location>
</feature>
<feature type="glycosylation site" description="N-linked (GlcNAc...) asparagine" evidence="2">
    <location>
        <position position="153"/>
    </location>
</feature>
<feature type="disulfide bond" evidence="2">
    <location>
        <begin position="31"/>
        <end position="162"/>
    </location>
</feature>
<feature type="disulfide bond" evidence="2">
    <location>
        <begin position="49"/>
        <end position="65"/>
    </location>
</feature>
<feature type="disulfide bond" evidence="2">
    <location>
        <begin position="97"/>
        <end position="253"/>
    </location>
</feature>
<feature type="disulfide bond" evidence="2">
    <location>
        <begin position="141"/>
        <end position="207"/>
    </location>
</feature>
<feature type="disulfide bond" evidence="2">
    <location>
        <begin position="173"/>
        <end position="186"/>
    </location>
</feature>
<feature type="disulfide bond" evidence="2">
    <location>
        <begin position="197"/>
        <end position="222"/>
    </location>
</feature>
<accession>E5L0E6</accession>
<protein>
    <recommendedName>
        <fullName evidence="6">Protein C activator</fullName>
        <shortName evidence="6">APL-C</shortName>
        <ecNumber>3.4.21.-</ecNumber>
    </recommendedName>
    <alternativeName>
        <fullName evidence="7">Snake venom serine protease</fullName>
        <shortName evidence="7">SVSP</shortName>
    </alternativeName>
</protein>
<dbReference type="EC" id="3.4.21.-"/>
<dbReference type="EMBL" id="HQ270467">
    <property type="protein sequence ID" value="ADP88562.1"/>
    <property type="molecule type" value="mRNA"/>
</dbReference>
<dbReference type="SMR" id="E5L0E6"/>
<dbReference type="MEROPS" id="S01.466"/>
<dbReference type="GO" id="GO:0005576">
    <property type="term" value="C:extracellular region"/>
    <property type="evidence" value="ECO:0007669"/>
    <property type="project" value="UniProtKB-SubCell"/>
</dbReference>
<dbReference type="GO" id="GO:0030141">
    <property type="term" value="C:secretory granule"/>
    <property type="evidence" value="ECO:0007669"/>
    <property type="project" value="TreeGrafter"/>
</dbReference>
<dbReference type="GO" id="GO:0004252">
    <property type="term" value="F:serine-type endopeptidase activity"/>
    <property type="evidence" value="ECO:0007669"/>
    <property type="project" value="InterPro"/>
</dbReference>
<dbReference type="GO" id="GO:0090729">
    <property type="term" value="F:toxin activity"/>
    <property type="evidence" value="ECO:0007669"/>
    <property type="project" value="UniProtKB-KW"/>
</dbReference>
<dbReference type="GO" id="GO:0006508">
    <property type="term" value="P:proteolysis"/>
    <property type="evidence" value="ECO:0007669"/>
    <property type="project" value="UniProtKB-KW"/>
</dbReference>
<dbReference type="CDD" id="cd00190">
    <property type="entry name" value="Tryp_SPc"/>
    <property type="match status" value="1"/>
</dbReference>
<dbReference type="FunFam" id="2.40.10.10:FF:000158">
    <property type="entry name" value="Thrombin-like enzyme saxthrombin"/>
    <property type="match status" value="1"/>
</dbReference>
<dbReference type="FunFam" id="2.40.10.10:FF:000153">
    <property type="entry name" value="Venom plasminogen activator TSV-PA"/>
    <property type="match status" value="1"/>
</dbReference>
<dbReference type="Gene3D" id="2.40.10.10">
    <property type="entry name" value="Trypsin-like serine proteases"/>
    <property type="match status" value="2"/>
</dbReference>
<dbReference type="InterPro" id="IPR009003">
    <property type="entry name" value="Peptidase_S1_PA"/>
</dbReference>
<dbReference type="InterPro" id="IPR043504">
    <property type="entry name" value="Peptidase_S1_PA_chymotrypsin"/>
</dbReference>
<dbReference type="InterPro" id="IPR001314">
    <property type="entry name" value="Peptidase_S1A"/>
</dbReference>
<dbReference type="InterPro" id="IPR001254">
    <property type="entry name" value="Trypsin_dom"/>
</dbReference>
<dbReference type="InterPro" id="IPR033116">
    <property type="entry name" value="TRYPSIN_SER"/>
</dbReference>
<dbReference type="PANTHER" id="PTHR24271:SF47">
    <property type="entry name" value="KALLIKREIN-1"/>
    <property type="match status" value="1"/>
</dbReference>
<dbReference type="PANTHER" id="PTHR24271">
    <property type="entry name" value="KALLIKREIN-RELATED"/>
    <property type="match status" value="1"/>
</dbReference>
<dbReference type="Pfam" id="PF00089">
    <property type="entry name" value="Trypsin"/>
    <property type="match status" value="1"/>
</dbReference>
<dbReference type="PRINTS" id="PR00722">
    <property type="entry name" value="CHYMOTRYPSIN"/>
</dbReference>
<dbReference type="SMART" id="SM00020">
    <property type="entry name" value="Tryp_SPc"/>
    <property type="match status" value="1"/>
</dbReference>
<dbReference type="SUPFAM" id="SSF50494">
    <property type="entry name" value="Trypsin-like serine proteases"/>
    <property type="match status" value="1"/>
</dbReference>
<dbReference type="PROSITE" id="PS50240">
    <property type="entry name" value="TRYPSIN_DOM"/>
    <property type="match status" value="1"/>
</dbReference>
<dbReference type="PROSITE" id="PS00135">
    <property type="entry name" value="TRYPSIN_SER"/>
    <property type="match status" value="1"/>
</dbReference>
<proteinExistence type="evidence at transcript level"/>
<reference key="1">
    <citation type="journal article" date="2011" name="Toxicon">
        <title>Phylogenetic analysis of serine proteases from Russell's viper (Daboia russelli siamensis) and Agkistrodon piscivorus leucostoma venom.</title>
        <authorList>
            <person name="Sukkapan P."/>
            <person name="Jia Y."/>
            <person name="Nuchprayoon I."/>
            <person name="Perez J.C."/>
        </authorList>
    </citation>
    <scope>NUCLEOTIDE SEQUENCE [MRNA]</scope>
    <source>
        <tissue>Venom gland</tissue>
    </source>
</reference>
<organism>
    <name type="scientific">Agkistrodon piscivorus leucostoma</name>
    <name type="common">Western cottonmouth</name>
    <name type="synonym">Acontias leucostoma</name>
    <dbReference type="NCBI Taxonomy" id="459671"/>
    <lineage>
        <taxon>Eukaryota</taxon>
        <taxon>Metazoa</taxon>
        <taxon>Chordata</taxon>
        <taxon>Craniata</taxon>
        <taxon>Vertebrata</taxon>
        <taxon>Euteleostomi</taxon>
        <taxon>Lepidosauria</taxon>
        <taxon>Squamata</taxon>
        <taxon>Bifurcata</taxon>
        <taxon>Unidentata</taxon>
        <taxon>Episquamata</taxon>
        <taxon>Toxicofera</taxon>
        <taxon>Serpentes</taxon>
        <taxon>Colubroidea</taxon>
        <taxon>Viperidae</taxon>
        <taxon>Crotalinae</taxon>
        <taxon>Agkistrodon</taxon>
    </lineage>
</organism>
<evidence type="ECO:0000250" key="1"/>
<evidence type="ECO:0000250" key="2">
    <source>
        <dbReference type="UniProtKB" id="P09872"/>
    </source>
</evidence>
<evidence type="ECO:0000250" key="3">
    <source>
        <dbReference type="UniProtKB" id="Q8UVX1"/>
    </source>
</evidence>
<evidence type="ECO:0000255" key="4"/>
<evidence type="ECO:0000255" key="5">
    <source>
        <dbReference type="PROSITE-ProRule" id="PRU00274"/>
    </source>
</evidence>
<evidence type="ECO:0000303" key="6">
    <source>
    </source>
</evidence>
<evidence type="ECO:0000305" key="7"/>
<comment type="function">
    <text evidence="2">Snake venom serine protease that selectively cleaves the heavy chain of protein C (PROC). This activation is thrombomodulin-independent.</text>
</comment>
<comment type="subunit">
    <text evidence="1">Monomer.</text>
</comment>
<comment type="subcellular location">
    <subcellularLocation>
        <location evidence="2">Secreted</location>
    </subcellularLocation>
</comment>
<comment type="tissue specificity">
    <text evidence="7">Expressed by the venom gland.</text>
</comment>
<comment type="similarity">
    <text evidence="7">Belongs to the peptidase S1 family. Snake venom subfamily.</text>
</comment>
<keyword id="KW-1203">Blood coagulation cascade inhibiting toxin</keyword>
<keyword id="KW-1015">Disulfide bond</keyword>
<keyword id="KW-0325">Glycoprotein</keyword>
<keyword id="KW-1199">Hemostasis impairing toxin</keyword>
<keyword id="KW-0378">Hydrolase</keyword>
<keyword id="KW-0645">Protease</keyword>
<keyword id="KW-0964">Secreted</keyword>
<keyword id="KW-0720">Serine protease</keyword>
<keyword id="KW-0732">Signal</keyword>
<keyword id="KW-0800">Toxin</keyword>
<keyword id="KW-0865">Zymogen</keyword>